<organism>
    <name type="scientific">Legionella pneumophila subsp. pneumophila (strain Philadelphia 1 / ATCC 33152 / DSM 7513)</name>
    <dbReference type="NCBI Taxonomy" id="272624"/>
    <lineage>
        <taxon>Bacteria</taxon>
        <taxon>Pseudomonadati</taxon>
        <taxon>Pseudomonadota</taxon>
        <taxon>Gammaproteobacteria</taxon>
        <taxon>Legionellales</taxon>
        <taxon>Legionellaceae</taxon>
        <taxon>Legionella</taxon>
    </lineage>
</organism>
<protein>
    <recommendedName>
        <fullName evidence="1">Type III pantothenate kinase</fullName>
        <ecNumber evidence="1">2.7.1.33</ecNumber>
    </recommendedName>
    <alternativeName>
        <fullName evidence="1">PanK-III</fullName>
    </alternativeName>
    <alternativeName>
        <fullName evidence="1">Pantothenic acid kinase</fullName>
    </alternativeName>
</protein>
<proteinExistence type="evidence at protein level"/>
<gene>
    <name evidence="1" type="primary">coaX</name>
    <name type="ordered locus">lpg0911</name>
</gene>
<reference key="1">
    <citation type="journal article" date="2004" name="Science">
        <title>The genomic sequence of the accidental pathogen Legionella pneumophila.</title>
        <authorList>
            <person name="Chien M."/>
            <person name="Morozova I."/>
            <person name="Shi S."/>
            <person name="Sheng H."/>
            <person name="Chen J."/>
            <person name="Gomez S.M."/>
            <person name="Asamani G."/>
            <person name="Hill K."/>
            <person name="Nuara J."/>
            <person name="Feder M."/>
            <person name="Rineer J."/>
            <person name="Greenberg J.J."/>
            <person name="Steshenko V."/>
            <person name="Park S.H."/>
            <person name="Zhao B."/>
            <person name="Teplitskaya E."/>
            <person name="Edwards J.R."/>
            <person name="Pampou S."/>
            <person name="Georghiou A."/>
            <person name="Chou I.-C."/>
            <person name="Iannuccilli W."/>
            <person name="Ulz M.E."/>
            <person name="Kim D.H."/>
            <person name="Geringer-Sameth A."/>
            <person name="Goldsberry C."/>
            <person name="Morozov P."/>
            <person name="Fischer S.G."/>
            <person name="Segal G."/>
            <person name="Qu X."/>
            <person name="Rzhetsky A."/>
            <person name="Zhang P."/>
            <person name="Cayanis E."/>
            <person name="De Jong P.J."/>
            <person name="Ju J."/>
            <person name="Kalachikov S."/>
            <person name="Shuman H.A."/>
            <person name="Russo J.J."/>
        </authorList>
    </citation>
    <scope>NUCLEOTIDE SEQUENCE [LARGE SCALE GENOMIC DNA]</scope>
    <source>
        <strain>Philadelphia 1 / ATCC 33152 / DSM 7513</strain>
    </source>
</reference>
<dbReference type="EC" id="2.7.1.33" evidence="1"/>
<dbReference type="EMBL" id="AE017354">
    <property type="protein sequence ID" value="AAU26998.1"/>
    <property type="molecule type" value="Genomic_DNA"/>
</dbReference>
<dbReference type="RefSeq" id="WP_010946646.1">
    <property type="nucleotide sequence ID" value="NC_002942.5"/>
</dbReference>
<dbReference type="RefSeq" id="YP_094945.1">
    <property type="nucleotide sequence ID" value="NC_002942.5"/>
</dbReference>
<dbReference type="PDB" id="3DJC">
    <property type="method" value="X-ray"/>
    <property type="resolution" value="2.40 A"/>
    <property type="chains" value="A/B/C/D/E/F/G/H/I/J/K/L=2-256"/>
</dbReference>
<dbReference type="PDBsum" id="3DJC"/>
<dbReference type="SMR" id="Q5ZX22"/>
<dbReference type="STRING" id="272624.lpg0911"/>
<dbReference type="PaxDb" id="272624-lpg0911"/>
<dbReference type="KEGG" id="lpn:lpg0911"/>
<dbReference type="PATRIC" id="fig|272624.6.peg.944"/>
<dbReference type="eggNOG" id="COG1521">
    <property type="taxonomic scope" value="Bacteria"/>
</dbReference>
<dbReference type="HOGENOM" id="CLU_066627_1_0_6"/>
<dbReference type="OrthoDB" id="9781305at2"/>
<dbReference type="UniPathway" id="UPA00241">
    <property type="reaction ID" value="UER00352"/>
</dbReference>
<dbReference type="EvolutionaryTrace" id="Q5ZX22"/>
<dbReference type="Proteomes" id="UP000000609">
    <property type="component" value="Chromosome"/>
</dbReference>
<dbReference type="GO" id="GO:0005737">
    <property type="term" value="C:cytoplasm"/>
    <property type="evidence" value="ECO:0007669"/>
    <property type="project" value="UniProtKB-SubCell"/>
</dbReference>
<dbReference type="GO" id="GO:0005524">
    <property type="term" value="F:ATP binding"/>
    <property type="evidence" value="ECO:0007669"/>
    <property type="project" value="UniProtKB-UniRule"/>
</dbReference>
<dbReference type="GO" id="GO:0046872">
    <property type="term" value="F:metal ion binding"/>
    <property type="evidence" value="ECO:0007669"/>
    <property type="project" value="UniProtKB-KW"/>
</dbReference>
<dbReference type="GO" id="GO:0004594">
    <property type="term" value="F:pantothenate kinase activity"/>
    <property type="evidence" value="ECO:0007669"/>
    <property type="project" value="UniProtKB-UniRule"/>
</dbReference>
<dbReference type="GO" id="GO:0015937">
    <property type="term" value="P:coenzyme A biosynthetic process"/>
    <property type="evidence" value="ECO:0007669"/>
    <property type="project" value="UniProtKB-UniRule"/>
</dbReference>
<dbReference type="CDD" id="cd24015">
    <property type="entry name" value="ASKHA_NBD_PanK-III"/>
    <property type="match status" value="1"/>
</dbReference>
<dbReference type="Gene3D" id="3.30.420.40">
    <property type="match status" value="2"/>
</dbReference>
<dbReference type="HAMAP" id="MF_01274">
    <property type="entry name" value="Pantothen_kinase_3"/>
    <property type="match status" value="1"/>
</dbReference>
<dbReference type="InterPro" id="IPR043129">
    <property type="entry name" value="ATPase_NBD"/>
</dbReference>
<dbReference type="InterPro" id="IPR004619">
    <property type="entry name" value="Type_III_PanK"/>
</dbReference>
<dbReference type="NCBIfam" id="TIGR00671">
    <property type="entry name" value="baf"/>
    <property type="match status" value="1"/>
</dbReference>
<dbReference type="NCBIfam" id="NF009855">
    <property type="entry name" value="PRK13321.1"/>
    <property type="match status" value="1"/>
</dbReference>
<dbReference type="PANTHER" id="PTHR34265">
    <property type="entry name" value="TYPE III PANTOTHENATE KINASE"/>
    <property type="match status" value="1"/>
</dbReference>
<dbReference type="PANTHER" id="PTHR34265:SF1">
    <property type="entry name" value="TYPE III PANTOTHENATE KINASE"/>
    <property type="match status" value="1"/>
</dbReference>
<dbReference type="Pfam" id="PF03309">
    <property type="entry name" value="Pan_kinase"/>
    <property type="match status" value="1"/>
</dbReference>
<dbReference type="SUPFAM" id="SSF53067">
    <property type="entry name" value="Actin-like ATPase domain"/>
    <property type="match status" value="2"/>
</dbReference>
<name>COAX_LEGPH</name>
<sequence>MILCIDVGNSHIYGGVFDGDEIKLRFRHTSKVSTSDELGIFLKSVLRENNCSPETIRKIAICSVVPQVDYSLRSACVKYFSIDPFLLQAGVKTGLNIKYRNPVEVGADRIANAIAATHSFPNQNIIVIDFGTATTFCAISHKKAYLGGAILPGLRLSADALSKNTAKLPSVEIIKTESVVGRSTIESIQSGVYYGVLGACKELIQRIHHEAFNGDQILILATGGFASLFDKQGLYDHLVPDLVLQGIRLAAMMNTA</sequence>
<accession>Q5ZX22</accession>
<evidence type="ECO:0000255" key="1">
    <source>
        <dbReference type="HAMAP-Rule" id="MF_01274"/>
    </source>
</evidence>
<evidence type="ECO:0007829" key="2">
    <source>
        <dbReference type="PDB" id="3DJC"/>
    </source>
</evidence>
<keyword id="KW-0002">3D-structure</keyword>
<keyword id="KW-0067">ATP-binding</keyword>
<keyword id="KW-0173">Coenzyme A biosynthesis</keyword>
<keyword id="KW-0963">Cytoplasm</keyword>
<keyword id="KW-0418">Kinase</keyword>
<keyword id="KW-0479">Metal-binding</keyword>
<keyword id="KW-0547">Nucleotide-binding</keyword>
<keyword id="KW-0630">Potassium</keyword>
<keyword id="KW-1185">Reference proteome</keyword>
<keyword id="KW-0808">Transferase</keyword>
<feature type="chain" id="PRO_0000267553" description="Type III pantothenate kinase">
    <location>
        <begin position="1"/>
        <end position="256"/>
    </location>
</feature>
<feature type="active site" description="Proton acceptor" evidence="1">
    <location>
        <position position="108"/>
    </location>
</feature>
<feature type="binding site" evidence="1">
    <location>
        <begin position="6"/>
        <end position="13"/>
    </location>
    <ligand>
        <name>ATP</name>
        <dbReference type="ChEBI" id="CHEBI:30616"/>
    </ligand>
</feature>
<feature type="binding site" evidence="1">
    <location>
        <position position="99"/>
    </location>
    <ligand>
        <name>substrate</name>
    </ligand>
</feature>
<feature type="binding site" evidence="1">
    <location>
        <begin position="106"/>
        <end position="109"/>
    </location>
    <ligand>
        <name>substrate</name>
    </ligand>
</feature>
<feature type="binding site" evidence="1">
    <location>
        <position position="129"/>
    </location>
    <ligand>
        <name>K(+)</name>
        <dbReference type="ChEBI" id="CHEBI:29103"/>
    </ligand>
</feature>
<feature type="binding site" evidence="1">
    <location>
        <position position="132"/>
    </location>
    <ligand>
        <name>ATP</name>
        <dbReference type="ChEBI" id="CHEBI:30616"/>
    </ligand>
</feature>
<feature type="binding site" evidence="1">
    <location>
        <position position="184"/>
    </location>
    <ligand>
        <name>substrate</name>
    </ligand>
</feature>
<feature type="strand" evidence="2">
    <location>
        <begin position="2"/>
        <end position="7"/>
    </location>
</feature>
<feature type="strand" evidence="2">
    <location>
        <begin position="9"/>
        <end position="18"/>
    </location>
</feature>
<feature type="strand" evidence="2">
    <location>
        <begin position="21"/>
        <end position="29"/>
    </location>
</feature>
<feature type="helix" evidence="2">
    <location>
        <begin position="35"/>
        <end position="47"/>
    </location>
</feature>
<feature type="turn" evidence="2">
    <location>
        <begin position="48"/>
        <end position="50"/>
    </location>
</feature>
<feature type="helix" evidence="2">
    <location>
        <begin position="53"/>
        <end position="55"/>
    </location>
</feature>
<feature type="strand" evidence="2">
    <location>
        <begin position="58"/>
        <end position="64"/>
    </location>
</feature>
<feature type="helix" evidence="2">
    <location>
        <begin position="66"/>
        <end position="79"/>
    </location>
</feature>
<feature type="strand" evidence="2">
    <location>
        <begin position="89"/>
        <end position="91"/>
    </location>
</feature>
<feature type="helix" evidence="2">
    <location>
        <begin position="102"/>
        <end position="104"/>
    </location>
</feature>
<feature type="helix" evidence="2">
    <location>
        <begin position="107"/>
        <end position="119"/>
    </location>
</feature>
<feature type="strand" evidence="2">
    <location>
        <begin position="123"/>
        <end position="139"/>
    </location>
</feature>
<feature type="strand" evidence="2">
    <location>
        <begin position="143"/>
        <end position="152"/>
    </location>
</feature>
<feature type="helix" evidence="2">
    <location>
        <begin position="154"/>
        <end position="163"/>
    </location>
</feature>
<feature type="strand" evidence="2">
    <location>
        <begin position="181"/>
        <end position="183"/>
    </location>
</feature>
<feature type="helix" evidence="2">
    <location>
        <begin position="184"/>
        <end position="210"/>
    </location>
</feature>
<feature type="turn" evidence="2">
    <location>
        <begin position="211"/>
        <end position="214"/>
    </location>
</feature>
<feature type="strand" evidence="2">
    <location>
        <begin position="217"/>
        <end position="223"/>
    </location>
</feature>
<feature type="helix" evidence="2">
    <location>
        <begin position="226"/>
        <end position="229"/>
    </location>
</feature>
<feature type="turn" evidence="2">
    <location>
        <begin position="230"/>
        <end position="233"/>
    </location>
</feature>
<feature type="strand" evidence="2">
    <location>
        <begin position="236"/>
        <end position="238"/>
    </location>
</feature>
<feature type="helix" evidence="2">
    <location>
        <begin position="242"/>
        <end position="252"/>
    </location>
</feature>
<comment type="function">
    <text evidence="1">Catalyzes the phosphorylation of pantothenate (Pan), the first step in CoA biosynthesis.</text>
</comment>
<comment type="catalytic activity">
    <reaction evidence="1">
        <text>(R)-pantothenate + ATP = (R)-4'-phosphopantothenate + ADP + H(+)</text>
        <dbReference type="Rhea" id="RHEA:16373"/>
        <dbReference type="ChEBI" id="CHEBI:10986"/>
        <dbReference type="ChEBI" id="CHEBI:15378"/>
        <dbReference type="ChEBI" id="CHEBI:29032"/>
        <dbReference type="ChEBI" id="CHEBI:30616"/>
        <dbReference type="ChEBI" id="CHEBI:456216"/>
        <dbReference type="EC" id="2.7.1.33"/>
    </reaction>
</comment>
<comment type="cofactor">
    <cofactor evidence="1">
        <name>NH4(+)</name>
        <dbReference type="ChEBI" id="CHEBI:28938"/>
    </cofactor>
    <cofactor evidence="1">
        <name>K(+)</name>
        <dbReference type="ChEBI" id="CHEBI:29103"/>
    </cofactor>
    <text evidence="1">A monovalent cation. Ammonium or potassium.</text>
</comment>
<comment type="pathway">
    <text evidence="1">Cofactor biosynthesis; coenzyme A biosynthesis; CoA from (R)-pantothenate: step 1/5.</text>
</comment>
<comment type="subunit">
    <text evidence="1">Homodimer.</text>
</comment>
<comment type="subcellular location">
    <subcellularLocation>
        <location evidence="1">Cytoplasm</location>
    </subcellularLocation>
</comment>
<comment type="similarity">
    <text evidence="1">Belongs to the type III pantothenate kinase family.</text>
</comment>